<gene>
    <name evidence="1" type="primary">rpsJ</name>
    <name type="synonym">nusE</name>
    <name type="ordered locus">Z4692</name>
    <name type="ordered locus">ECs4186</name>
</gene>
<organism>
    <name type="scientific">Escherichia coli O157:H7</name>
    <dbReference type="NCBI Taxonomy" id="83334"/>
    <lineage>
        <taxon>Bacteria</taxon>
        <taxon>Pseudomonadati</taxon>
        <taxon>Pseudomonadota</taxon>
        <taxon>Gammaproteobacteria</taxon>
        <taxon>Enterobacterales</taxon>
        <taxon>Enterobacteriaceae</taxon>
        <taxon>Escherichia</taxon>
    </lineage>
</organism>
<dbReference type="EMBL" id="AE005174">
    <property type="protein sequence ID" value="AAG58442.1"/>
    <property type="molecule type" value="Genomic_DNA"/>
</dbReference>
<dbReference type="EMBL" id="BA000007">
    <property type="protein sequence ID" value="BAB37609.1"/>
    <property type="molecule type" value="Genomic_DNA"/>
</dbReference>
<dbReference type="PIR" id="B91152">
    <property type="entry name" value="B91152"/>
</dbReference>
<dbReference type="PIR" id="F85997">
    <property type="entry name" value="F85997"/>
</dbReference>
<dbReference type="RefSeq" id="NP_312213.1">
    <property type="nucleotide sequence ID" value="NC_002695.1"/>
</dbReference>
<dbReference type="RefSeq" id="WP_001181004.1">
    <property type="nucleotide sequence ID" value="NZ_VOAI01000041.1"/>
</dbReference>
<dbReference type="SMR" id="P0A7R7"/>
<dbReference type="STRING" id="155864.Z4692"/>
<dbReference type="GeneID" id="915961"/>
<dbReference type="GeneID" id="93778666"/>
<dbReference type="KEGG" id="ece:Z4692"/>
<dbReference type="KEGG" id="ecs:ECs_4186"/>
<dbReference type="PATRIC" id="fig|386585.9.peg.4369"/>
<dbReference type="eggNOG" id="COG0051">
    <property type="taxonomic scope" value="Bacteria"/>
</dbReference>
<dbReference type="HOGENOM" id="CLU_122625_1_3_6"/>
<dbReference type="OMA" id="VDIEIKM"/>
<dbReference type="Proteomes" id="UP000000558">
    <property type="component" value="Chromosome"/>
</dbReference>
<dbReference type="Proteomes" id="UP000002519">
    <property type="component" value="Chromosome"/>
</dbReference>
<dbReference type="GO" id="GO:1990904">
    <property type="term" value="C:ribonucleoprotein complex"/>
    <property type="evidence" value="ECO:0007669"/>
    <property type="project" value="UniProtKB-KW"/>
</dbReference>
<dbReference type="GO" id="GO:0005840">
    <property type="term" value="C:ribosome"/>
    <property type="evidence" value="ECO:0007669"/>
    <property type="project" value="UniProtKB-KW"/>
</dbReference>
<dbReference type="GO" id="GO:0003735">
    <property type="term" value="F:structural constituent of ribosome"/>
    <property type="evidence" value="ECO:0007669"/>
    <property type="project" value="InterPro"/>
</dbReference>
<dbReference type="GO" id="GO:0000049">
    <property type="term" value="F:tRNA binding"/>
    <property type="evidence" value="ECO:0007669"/>
    <property type="project" value="UniProtKB-UniRule"/>
</dbReference>
<dbReference type="GO" id="GO:0006412">
    <property type="term" value="P:translation"/>
    <property type="evidence" value="ECO:0007669"/>
    <property type="project" value="UniProtKB-UniRule"/>
</dbReference>
<dbReference type="FunFam" id="3.30.70.600:FF:000001">
    <property type="entry name" value="30S ribosomal protein S10"/>
    <property type="match status" value="1"/>
</dbReference>
<dbReference type="Gene3D" id="3.30.70.600">
    <property type="entry name" value="Ribosomal protein S10 domain"/>
    <property type="match status" value="1"/>
</dbReference>
<dbReference type="HAMAP" id="MF_00508">
    <property type="entry name" value="Ribosomal_uS10"/>
    <property type="match status" value="1"/>
</dbReference>
<dbReference type="InterPro" id="IPR001848">
    <property type="entry name" value="Ribosomal_uS10"/>
</dbReference>
<dbReference type="InterPro" id="IPR018268">
    <property type="entry name" value="Ribosomal_uS10_CS"/>
</dbReference>
<dbReference type="InterPro" id="IPR027486">
    <property type="entry name" value="Ribosomal_uS10_dom"/>
</dbReference>
<dbReference type="InterPro" id="IPR036838">
    <property type="entry name" value="Ribosomal_uS10_dom_sf"/>
</dbReference>
<dbReference type="NCBIfam" id="NF001861">
    <property type="entry name" value="PRK00596.1"/>
    <property type="match status" value="1"/>
</dbReference>
<dbReference type="NCBIfam" id="TIGR01049">
    <property type="entry name" value="rpsJ_bact"/>
    <property type="match status" value="1"/>
</dbReference>
<dbReference type="PANTHER" id="PTHR11700">
    <property type="entry name" value="30S RIBOSOMAL PROTEIN S10 FAMILY MEMBER"/>
    <property type="match status" value="1"/>
</dbReference>
<dbReference type="Pfam" id="PF00338">
    <property type="entry name" value="Ribosomal_S10"/>
    <property type="match status" value="1"/>
</dbReference>
<dbReference type="PRINTS" id="PR00971">
    <property type="entry name" value="RIBOSOMALS10"/>
</dbReference>
<dbReference type="SMART" id="SM01403">
    <property type="entry name" value="Ribosomal_S10"/>
    <property type="match status" value="1"/>
</dbReference>
<dbReference type="SUPFAM" id="SSF54999">
    <property type="entry name" value="Ribosomal protein S10"/>
    <property type="match status" value="1"/>
</dbReference>
<dbReference type="PROSITE" id="PS00361">
    <property type="entry name" value="RIBOSOMAL_S10"/>
    <property type="match status" value="1"/>
</dbReference>
<name>RS10_ECO57</name>
<comment type="function">
    <text evidence="1">Involved in the binding of tRNA to the ribosomes.</text>
</comment>
<comment type="subunit">
    <text evidence="1">Part of the 30S ribosomal subunit.</text>
</comment>
<comment type="similarity">
    <text evidence="1">Belongs to the universal ribosomal protein uS10 family.</text>
</comment>
<feature type="chain" id="PRO_0000146531" description="Small ribosomal subunit protein uS10">
    <location>
        <begin position="1"/>
        <end position="103"/>
    </location>
</feature>
<keyword id="KW-1185">Reference proteome</keyword>
<keyword id="KW-0687">Ribonucleoprotein</keyword>
<keyword id="KW-0689">Ribosomal protein</keyword>
<evidence type="ECO:0000255" key="1">
    <source>
        <dbReference type="HAMAP-Rule" id="MF_00508"/>
    </source>
</evidence>
<evidence type="ECO:0000305" key="2"/>
<accession>P0A7R7</accession>
<accession>P02364</accession>
<protein>
    <recommendedName>
        <fullName evidence="1">Small ribosomal subunit protein uS10</fullName>
    </recommendedName>
    <alternativeName>
        <fullName evidence="2">30S ribosomal protein S10</fullName>
    </alternativeName>
</protein>
<sequence length="103" mass="11736">MQNQRIRIRLKAFDHRLIDQATAEIVETAKRTGAQVRGPIPLPTRKERFTVLISPHVNKDARDQYEIRTHLRLVDIVEPTEKTVDALMRLDLAAGVDVQISLG</sequence>
<reference key="1">
    <citation type="journal article" date="2001" name="Nature">
        <title>Genome sequence of enterohaemorrhagic Escherichia coli O157:H7.</title>
        <authorList>
            <person name="Perna N.T."/>
            <person name="Plunkett G. III"/>
            <person name="Burland V."/>
            <person name="Mau B."/>
            <person name="Glasner J.D."/>
            <person name="Rose D.J."/>
            <person name="Mayhew G.F."/>
            <person name="Evans P.S."/>
            <person name="Gregor J."/>
            <person name="Kirkpatrick H.A."/>
            <person name="Posfai G."/>
            <person name="Hackett J."/>
            <person name="Klink S."/>
            <person name="Boutin A."/>
            <person name="Shao Y."/>
            <person name="Miller L."/>
            <person name="Grotbeck E.J."/>
            <person name="Davis N.W."/>
            <person name="Lim A."/>
            <person name="Dimalanta E.T."/>
            <person name="Potamousis K."/>
            <person name="Apodaca J."/>
            <person name="Anantharaman T.S."/>
            <person name="Lin J."/>
            <person name="Yen G."/>
            <person name="Schwartz D.C."/>
            <person name="Welch R.A."/>
            <person name="Blattner F.R."/>
        </authorList>
    </citation>
    <scope>NUCLEOTIDE SEQUENCE [LARGE SCALE GENOMIC DNA]</scope>
    <source>
        <strain>O157:H7 / EDL933 / ATCC 700927 / EHEC</strain>
    </source>
</reference>
<reference key="2">
    <citation type="journal article" date="2001" name="DNA Res.">
        <title>Complete genome sequence of enterohemorrhagic Escherichia coli O157:H7 and genomic comparison with a laboratory strain K-12.</title>
        <authorList>
            <person name="Hayashi T."/>
            <person name="Makino K."/>
            <person name="Ohnishi M."/>
            <person name="Kurokawa K."/>
            <person name="Ishii K."/>
            <person name="Yokoyama K."/>
            <person name="Han C.-G."/>
            <person name="Ohtsubo E."/>
            <person name="Nakayama K."/>
            <person name="Murata T."/>
            <person name="Tanaka M."/>
            <person name="Tobe T."/>
            <person name="Iida T."/>
            <person name="Takami H."/>
            <person name="Honda T."/>
            <person name="Sasakawa C."/>
            <person name="Ogasawara N."/>
            <person name="Yasunaga T."/>
            <person name="Kuhara S."/>
            <person name="Shiba T."/>
            <person name="Hattori M."/>
            <person name="Shinagawa H."/>
        </authorList>
    </citation>
    <scope>NUCLEOTIDE SEQUENCE [LARGE SCALE GENOMIC DNA]</scope>
    <source>
        <strain>O157:H7 / Sakai / RIMD 0509952 / EHEC</strain>
    </source>
</reference>
<proteinExistence type="inferred from homology"/>